<reference key="1">
    <citation type="journal article" date="1991" name="J. Biol. Chem.">
        <title>Cloning and characterization of a Saccharomyces cerevisiae gene encoding a new member of the ubiquitin-conjugating protein family.</title>
        <authorList>
            <person name="Qin S."/>
            <person name="Nakajima B."/>
            <person name="Nomura M."/>
            <person name="Arfin S.M."/>
        </authorList>
    </citation>
    <scope>NUCLEOTIDE SEQUENCE [GENOMIC DNA]</scope>
    <scope>FUNCTION</scope>
    <scope>CATALYTIC ACTIVITY</scope>
    <scope>PATHWAY</scope>
</reference>
<reference key="2">
    <citation type="journal article" date="1997" name="Nature">
        <title>The nucleotide sequence of Saccharomyces cerevisiae chromosome V.</title>
        <authorList>
            <person name="Dietrich F.S."/>
            <person name="Mulligan J.T."/>
            <person name="Hennessy K.M."/>
            <person name="Yelton M.A."/>
            <person name="Allen E."/>
            <person name="Araujo R."/>
            <person name="Aviles E."/>
            <person name="Berno A."/>
            <person name="Brennan T."/>
            <person name="Carpenter J."/>
            <person name="Chen E."/>
            <person name="Cherry J.M."/>
            <person name="Chung E."/>
            <person name="Duncan M."/>
            <person name="Guzman E."/>
            <person name="Hartzell G."/>
            <person name="Hunicke-Smith S."/>
            <person name="Hyman R.W."/>
            <person name="Kayser A."/>
            <person name="Komp C."/>
            <person name="Lashkari D."/>
            <person name="Lew H."/>
            <person name="Lin D."/>
            <person name="Mosedale D."/>
            <person name="Nakahara K."/>
            <person name="Namath A."/>
            <person name="Norgren R."/>
            <person name="Oefner P."/>
            <person name="Oh C."/>
            <person name="Petel F.X."/>
            <person name="Roberts D."/>
            <person name="Sehl P."/>
            <person name="Schramm S."/>
            <person name="Shogren T."/>
            <person name="Smith V."/>
            <person name="Taylor P."/>
            <person name="Wei Y."/>
            <person name="Botstein D."/>
            <person name="Davis R.W."/>
        </authorList>
    </citation>
    <scope>NUCLEOTIDE SEQUENCE [LARGE SCALE GENOMIC DNA]</scope>
    <source>
        <strain>ATCC 204508 / S288c</strain>
    </source>
</reference>
<reference key="3">
    <citation type="journal article" date="2014" name="G3 (Bethesda)">
        <title>The reference genome sequence of Saccharomyces cerevisiae: Then and now.</title>
        <authorList>
            <person name="Engel S.R."/>
            <person name="Dietrich F.S."/>
            <person name="Fisk D.G."/>
            <person name="Binkley G."/>
            <person name="Balakrishnan R."/>
            <person name="Costanzo M.C."/>
            <person name="Dwight S.S."/>
            <person name="Hitz B.C."/>
            <person name="Karra K."/>
            <person name="Nash R.S."/>
            <person name="Weng S."/>
            <person name="Wong E.D."/>
            <person name="Lloyd P."/>
            <person name="Skrzypek M.S."/>
            <person name="Miyasato S.R."/>
            <person name="Simison M."/>
            <person name="Cherry J.M."/>
        </authorList>
    </citation>
    <scope>GENOME REANNOTATION</scope>
    <source>
        <strain>ATCC 204508 / S288c</strain>
    </source>
</reference>
<reference key="4">
    <citation type="journal article" date="1994" name="J. Biol. Chem.">
        <title>A human ubiquitin-conjugating enzyme homologous to yeast UBC8.</title>
        <authorList>
            <person name="Kaiser P."/>
            <person name="Seufert W."/>
            <person name="Hoefferer L."/>
            <person name="Kofler B."/>
            <person name="Sachsenmaier C."/>
            <person name="Herzog H."/>
            <person name="Jentsch S."/>
            <person name="Schweiger M."/>
            <person name="Schneider R."/>
        </authorList>
    </citation>
    <scope>SEQUENCE REVISION TO N-TERMINUS</scope>
</reference>
<reference key="5">
    <citation type="journal article" date="1998" name="J. Biol. Chem.">
        <title>Proteins of newly isolated mutants and the amino-terminal proline are essential for ubiquitin-proteasome-catalyzed catabolite degradation of fructose-1,6-bisphosphatase of Saccharomyces cerevisiae.</title>
        <authorList>
            <person name="Haemmerle M."/>
            <person name="Bauer J."/>
            <person name="Rose M."/>
            <person name="Szallies A."/>
            <person name="Thumm M."/>
            <person name="Duesterhus S."/>
            <person name="Mecke D."/>
            <person name="Entian K.D."/>
            <person name="Wolf D.H."/>
        </authorList>
    </citation>
    <scope>FUNCTION</scope>
</reference>
<reference key="6">
    <citation type="journal article" date="2000" name="EMBO J.">
        <title>Ubc8p functions in catabolite degradation of fructose-1, 6-bisphosphatase in yeast.</title>
        <authorList>
            <person name="Schuele T."/>
            <person name="Rose M."/>
            <person name="Entian K.-D."/>
            <person name="Thumm M."/>
            <person name="Wolf D.H."/>
        </authorList>
    </citation>
    <scope>FUNCTION</scope>
    <scope>SUBCELLULAR LOCATION</scope>
</reference>
<reference key="7">
    <citation type="journal article" date="2003" name="Mol. Biol. Cell">
        <title>Catabolite degradation of fructose-1,6-bisphosphatase in the yeast Saccharomyces cerevisiae: a genome-wide screen identifies eight novel GID genes and indicates the existence of two degradation pathways.</title>
        <authorList>
            <person name="Regelmann J."/>
            <person name="Schuele T."/>
            <person name="Josupeit F.S."/>
            <person name="Horak J."/>
            <person name="Rose M."/>
            <person name="Entian K.-D."/>
            <person name="Thumm M."/>
            <person name="Wolf D.H."/>
        </authorList>
    </citation>
    <scope>FUNCTION</scope>
</reference>
<reference key="8">
    <citation type="journal article" date="2003" name="Nature">
        <title>Global analysis of protein expression in yeast.</title>
        <authorList>
            <person name="Ghaemmaghami S."/>
            <person name="Huh W.-K."/>
            <person name="Bower K."/>
            <person name="Howson R.W."/>
            <person name="Belle A."/>
            <person name="Dephoure N."/>
            <person name="O'Shea E.K."/>
            <person name="Weissman J.S."/>
        </authorList>
    </citation>
    <scope>LEVEL OF PROTEIN EXPRESSION [LARGE SCALE ANALYSIS]</scope>
</reference>
<reference key="9">
    <citation type="journal article" date="2017" name="Science">
        <title>An N-end rule pathway that recognizes proline and destroys gluconeogenic enzymes.</title>
        <authorList>
            <person name="Chen S.J."/>
            <person name="Wu X."/>
            <person name="Wadas B."/>
            <person name="Oh J.H."/>
            <person name="Varshavsky A."/>
        </authorList>
    </citation>
    <scope>FUNCTION</scope>
</reference>
<proteinExistence type="evidence at protein level"/>
<dbReference type="EC" id="2.3.2.23" evidence="7"/>
<dbReference type="EMBL" id="M65083">
    <property type="status" value="NOT_ANNOTATED_CDS"/>
    <property type="molecule type" value="Genomic_DNA"/>
</dbReference>
<dbReference type="EMBL" id="U18530">
    <property type="protein sequence ID" value="AAB64489.1"/>
    <property type="status" value="ALT_INIT"/>
    <property type="molecule type" value="Genomic_DNA"/>
</dbReference>
<dbReference type="EMBL" id="Z29329">
    <property type="protein sequence ID" value="CAA82526.1"/>
    <property type="molecule type" value="Genomic_DNA"/>
</dbReference>
<dbReference type="EMBL" id="BK006939">
    <property type="protein sequence ID" value="DAA07641.1"/>
    <property type="molecule type" value="Genomic_DNA"/>
</dbReference>
<dbReference type="PIR" id="B53516">
    <property type="entry name" value="B53516"/>
</dbReference>
<dbReference type="RefSeq" id="NP_010904.2">
    <property type="nucleotide sequence ID" value="NM_001178827.1"/>
</dbReference>
<dbReference type="PDB" id="8PMQ">
    <property type="method" value="EM"/>
    <property type="resolution" value="3.53 A"/>
    <property type="chains" value="E=1-218"/>
</dbReference>
<dbReference type="PDBsum" id="8PMQ"/>
<dbReference type="EMDB" id="EMD-17764"/>
<dbReference type="SMR" id="P28263"/>
<dbReference type="BioGRID" id="36719">
    <property type="interactions" value="124"/>
</dbReference>
<dbReference type="DIP" id="DIP-5299N"/>
<dbReference type="FunCoup" id="P28263">
    <property type="interactions" value="1021"/>
</dbReference>
<dbReference type="IntAct" id="P28263">
    <property type="interactions" value="6"/>
</dbReference>
<dbReference type="MINT" id="P28263"/>
<dbReference type="STRING" id="4932.YEL012W"/>
<dbReference type="CarbonylDB" id="P28263"/>
<dbReference type="iPTMnet" id="P28263"/>
<dbReference type="PaxDb" id="4932-YEL012W"/>
<dbReference type="PeptideAtlas" id="P28263"/>
<dbReference type="EnsemblFungi" id="YEL012W_mRNA">
    <property type="protein sequence ID" value="YEL012W"/>
    <property type="gene ID" value="YEL012W"/>
</dbReference>
<dbReference type="GeneID" id="856704"/>
<dbReference type="KEGG" id="sce:YEL012W"/>
<dbReference type="AGR" id="SGD:S000000738"/>
<dbReference type="SGD" id="S000000738">
    <property type="gene designation" value="UBC8"/>
</dbReference>
<dbReference type="VEuPathDB" id="FungiDB:YEL012W"/>
<dbReference type="eggNOG" id="KOG0416">
    <property type="taxonomic scope" value="Eukaryota"/>
</dbReference>
<dbReference type="GeneTree" id="ENSGT00390000004852"/>
<dbReference type="HOGENOM" id="CLU_030988_7_1_1"/>
<dbReference type="InParanoid" id="P28263"/>
<dbReference type="OMA" id="KFYVRFK"/>
<dbReference type="OrthoDB" id="269518at2759"/>
<dbReference type="BioCyc" id="YEAST:G3O-30138-MONOMER"/>
<dbReference type="Reactome" id="R-SCE-8866652">
    <property type="pathway name" value="Synthesis of active ubiquitin: roles of E1 and E2 enzymes"/>
</dbReference>
<dbReference type="Reactome" id="R-SCE-983168">
    <property type="pathway name" value="Antigen processing: Ubiquitination &amp; Proteasome degradation"/>
</dbReference>
<dbReference type="UniPathway" id="UPA00143"/>
<dbReference type="BioGRID-ORCS" id="856704">
    <property type="hits" value="0 hits in 10 CRISPR screens"/>
</dbReference>
<dbReference type="PRO" id="PR:P28263"/>
<dbReference type="Proteomes" id="UP000002311">
    <property type="component" value="Chromosome V"/>
</dbReference>
<dbReference type="RNAct" id="P28263">
    <property type="molecule type" value="protein"/>
</dbReference>
<dbReference type="GO" id="GO:0005737">
    <property type="term" value="C:cytoplasm"/>
    <property type="evidence" value="ECO:0000314"/>
    <property type="project" value="SGD"/>
</dbReference>
<dbReference type="GO" id="GO:0005739">
    <property type="term" value="C:mitochondrion"/>
    <property type="evidence" value="ECO:0007669"/>
    <property type="project" value="GOC"/>
</dbReference>
<dbReference type="GO" id="GO:0005634">
    <property type="term" value="C:nucleus"/>
    <property type="evidence" value="ECO:0000318"/>
    <property type="project" value="GO_Central"/>
</dbReference>
<dbReference type="GO" id="GO:0005524">
    <property type="term" value="F:ATP binding"/>
    <property type="evidence" value="ECO:0007669"/>
    <property type="project" value="UniProtKB-KW"/>
</dbReference>
<dbReference type="GO" id="GO:0061631">
    <property type="term" value="F:ubiquitin conjugating enzyme activity"/>
    <property type="evidence" value="ECO:0000318"/>
    <property type="project" value="GO_Central"/>
</dbReference>
<dbReference type="GO" id="GO:0004842">
    <property type="term" value="F:ubiquitin-protein transferase activity"/>
    <property type="evidence" value="ECO:0000314"/>
    <property type="project" value="SGD"/>
</dbReference>
<dbReference type="GO" id="GO:0070096">
    <property type="term" value="P:mitochondrial outer membrane translocase complex assembly"/>
    <property type="evidence" value="ECO:0000315"/>
    <property type="project" value="SGD"/>
</dbReference>
<dbReference type="GO" id="GO:0045721">
    <property type="term" value="P:negative regulation of gluconeogenesis"/>
    <property type="evidence" value="ECO:0000315"/>
    <property type="project" value="SGD"/>
</dbReference>
<dbReference type="GO" id="GO:0043161">
    <property type="term" value="P:proteasome-mediated ubiquitin-dependent protein catabolic process"/>
    <property type="evidence" value="ECO:0000315"/>
    <property type="project" value="SGD"/>
</dbReference>
<dbReference type="GO" id="GO:0000209">
    <property type="term" value="P:protein polyubiquitination"/>
    <property type="evidence" value="ECO:0000318"/>
    <property type="project" value="GO_Central"/>
</dbReference>
<dbReference type="GO" id="GO:0006511">
    <property type="term" value="P:ubiquitin-dependent protein catabolic process"/>
    <property type="evidence" value="ECO:0000315"/>
    <property type="project" value="SGD"/>
</dbReference>
<dbReference type="CDD" id="cd23797">
    <property type="entry name" value="UBCc_UBE2H"/>
    <property type="match status" value="1"/>
</dbReference>
<dbReference type="FunFam" id="3.10.110.10:FF:000016">
    <property type="entry name" value="Ubiquitin-conjugating enzyme E2 H"/>
    <property type="match status" value="1"/>
</dbReference>
<dbReference type="Gene3D" id="3.10.110.10">
    <property type="entry name" value="Ubiquitin Conjugating Enzyme"/>
    <property type="match status" value="1"/>
</dbReference>
<dbReference type="InterPro" id="IPR000608">
    <property type="entry name" value="UBQ-conjugat_E2_core"/>
</dbReference>
<dbReference type="InterPro" id="IPR023313">
    <property type="entry name" value="UBQ-conjugating_AS"/>
</dbReference>
<dbReference type="InterPro" id="IPR016135">
    <property type="entry name" value="UBQ-conjugating_enzyme/RWD"/>
</dbReference>
<dbReference type="PANTHER" id="PTHR24068">
    <property type="entry name" value="UBIQUITIN-CONJUGATING ENZYME E2"/>
    <property type="match status" value="1"/>
</dbReference>
<dbReference type="Pfam" id="PF00179">
    <property type="entry name" value="UQ_con"/>
    <property type="match status" value="1"/>
</dbReference>
<dbReference type="SMART" id="SM00212">
    <property type="entry name" value="UBCc"/>
    <property type="match status" value="1"/>
</dbReference>
<dbReference type="SUPFAM" id="SSF54495">
    <property type="entry name" value="UBC-like"/>
    <property type="match status" value="1"/>
</dbReference>
<dbReference type="PROSITE" id="PS00183">
    <property type="entry name" value="UBC_1"/>
    <property type="match status" value="1"/>
</dbReference>
<dbReference type="PROSITE" id="PS50127">
    <property type="entry name" value="UBC_2"/>
    <property type="match status" value="1"/>
</dbReference>
<accession>P28263</accession>
<accession>D3DLN7</accession>
<name>UBC8_YEAST</name>
<gene>
    <name type="primary">UBC8</name>
    <name type="synonym">GID3</name>
    <name type="ordered locus">YEL012W</name>
</gene>
<keyword id="KW-0002">3D-structure</keyword>
<keyword id="KW-0067">ATP-binding</keyword>
<keyword id="KW-0963">Cytoplasm</keyword>
<keyword id="KW-0547">Nucleotide-binding</keyword>
<keyword id="KW-1185">Reference proteome</keyword>
<keyword id="KW-0808">Transferase</keyword>
<keyword id="KW-0833">Ubl conjugation pathway</keyword>
<sequence>MSSSKRRIETDVMKLLMSDHQVDLINDSMQEFHVKFLGPKDTPYENGVWRLHVELPDNYPYKSPSIGFVNKIFHPNIDIASGSICLDVINSTWSPLYDLINIVEWMIPGLLKEPNGSDPLNNEAATLQLRDKKLYEEKIKEYIDKYATKEKYQQMFGGDNDSDDSDSGGDLQEEDSDSDEDMDGTGVSSGDDSVDELSEDLSDIDVSDDDDYDEVANQ</sequence>
<feature type="chain" id="PRO_0000082555" description="Ubiquitin-conjugating enzyme E2-24 kDa">
    <location>
        <begin position="1"/>
        <end position="218"/>
    </location>
</feature>
<feature type="domain" description="UBC core" evidence="1">
    <location>
        <begin position="3"/>
        <end position="148"/>
    </location>
</feature>
<feature type="region of interest" description="Disordered" evidence="3">
    <location>
        <begin position="154"/>
        <end position="218"/>
    </location>
</feature>
<feature type="compositionally biased region" description="Acidic residues" evidence="3">
    <location>
        <begin position="160"/>
        <end position="183"/>
    </location>
</feature>
<feature type="compositionally biased region" description="Acidic residues" evidence="3">
    <location>
        <begin position="192"/>
        <end position="218"/>
    </location>
</feature>
<feature type="active site" description="Glycyl thioester intermediate" evidence="1 2">
    <location>
        <position position="85"/>
    </location>
</feature>
<comment type="function">
    <text evidence="1 4 5 7 8 9">Catalyzes the covalent attachment of ubiquitin to other proteins (By similarity) (PubMed:1869573). Required for the adaptation to the presence of glucose in the growth medium; mediates the degradation of enzymes involved in gluconeogenesis when cells are shifted to glucose-containing medium (PubMed:10811607, PubMed:12686616, PubMed:9737955). Required for proteasome-dependent catabolite degradation of fructose-1,6-bisphosphatase (FBP1) (PubMed:10811607, PubMed:12686616, PubMed:28126757, PubMed:9737955).</text>
</comment>
<comment type="catalytic activity">
    <reaction evidence="1 7">
        <text>S-ubiquitinyl-[E1 ubiquitin-activating enzyme]-L-cysteine + [E2 ubiquitin-conjugating enzyme]-L-cysteine = [E1 ubiquitin-activating enzyme]-L-cysteine + S-ubiquitinyl-[E2 ubiquitin-conjugating enzyme]-L-cysteine.</text>
        <dbReference type="EC" id="2.3.2.23"/>
    </reaction>
</comment>
<comment type="pathway">
    <text evidence="1 7">Protein modification; protein ubiquitination.</text>
</comment>
<comment type="subcellular location">
    <subcellularLocation>
        <location evidence="4">Cytoplasm</location>
    </subcellularLocation>
</comment>
<comment type="miscellaneous">
    <text evidence="6">Present with 1590 molecules/cell in log phase SD medium.</text>
</comment>
<comment type="similarity">
    <text evidence="1">Belongs to the ubiquitin-conjugating enzyme family.</text>
</comment>
<comment type="sequence caution" evidence="10">
    <conflict type="erroneous initiation">
        <sequence resource="EMBL-CDS" id="AAB64489"/>
    </conflict>
</comment>
<organism>
    <name type="scientific">Saccharomyces cerevisiae (strain ATCC 204508 / S288c)</name>
    <name type="common">Baker's yeast</name>
    <dbReference type="NCBI Taxonomy" id="559292"/>
    <lineage>
        <taxon>Eukaryota</taxon>
        <taxon>Fungi</taxon>
        <taxon>Dikarya</taxon>
        <taxon>Ascomycota</taxon>
        <taxon>Saccharomycotina</taxon>
        <taxon>Saccharomycetes</taxon>
        <taxon>Saccharomycetales</taxon>
        <taxon>Saccharomycetaceae</taxon>
        <taxon>Saccharomyces</taxon>
    </lineage>
</organism>
<evidence type="ECO:0000255" key="1">
    <source>
        <dbReference type="PROSITE-ProRule" id="PRU00388"/>
    </source>
</evidence>
<evidence type="ECO:0000255" key="2">
    <source>
        <dbReference type="PROSITE-ProRule" id="PRU10133"/>
    </source>
</evidence>
<evidence type="ECO:0000256" key="3">
    <source>
        <dbReference type="SAM" id="MobiDB-lite"/>
    </source>
</evidence>
<evidence type="ECO:0000269" key="4">
    <source>
    </source>
</evidence>
<evidence type="ECO:0000269" key="5">
    <source>
    </source>
</evidence>
<evidence type="ECO:0000269" key="6">
    <source>
    </source>
</evidence>
<evidence type="ECO:0000269" key="7">
    <source>
    </source>
</evidence>
<evidence type="ECO:0000269" key="8">
    <source>
    </source>
</evidence>
<evidence type="ECO:0000269" key="9">
    <source>
    </source>
</evidence>
<evidence type="ECO:0000305" key="10"/>
<protein>
    <recommendedName>
        <fullName>Ubiquitin-conjugating enzyme E2-24 kDa</fullName>
        <ecNumber evidence="7">2.3.2.23</ecNumber>
    </recommendedName>
    <alternativeName>
        <fullName>E2 ubiquitin-conjugating enzyme 8</fullName>
    </alternativeName>
    <alternativeName>
        <fullName>Glucose-induced degradation protein 3</fullName>
    </alternativeName>
    <alternativeName>
        <fullName>Ubiquitin carrier protein</fullName>
    </alternativeName>
    <alternativeName>
        <fullName>Ubiquitin-protein ligase</fullName>
    </alternativeName>
</protein>